<sequence length="219" mass="24039">MTEQVQANETETPVAVADERIIRETGIDAKVAGIVEPVINTLGFRLVRVRLSGLNGQTLQIMAERPDGTMTVDDCELVSRTVAPVLDVEDPISGKYHLEISSPGIDRPLVRKSDFSDWAGHIAKVETSIVHEGRKKFRGRIVVGEADSVTIESDQISYGNEPVVRIPFDLISDARLVLTDDLIRDALRKDKALREGRIPGDDLGAEPEDAASTETQEKK</sequence>
<reference key="1">
    <citation type="journal article" date="2002" name="Proc. Natl. Acad. Sci. U.S.A.">
        <title>The Brucella suis genome reveals fundamental similarities between animal and plant pathogens and symbionts.</title>
        <authorList>
            <person name="Paulsen I.T."/>
            <person name="Seshadri R."/>
            <person name="Nelson K.E."/>
            <person name="Eisen J.A."/>
            <person name="Heidelberg J.F."/>
            <person name="Read T.D."/>
            <person name="Dodson R.J."/>
            <person name="Umayam L.A."/>
            <person name="Brinkac L.M."/>
            <person name="Beanan M.J."/>
            <person name="Daugherty S.C."/>
            <person name="DeBoy R.T."/>
            <person name="Durkin A.S."/>
            <person name="Kolonay J.F."/>
            <person name="Madupu R."/>
            <person name="Nelson W.C."/>
            <person name="Ayodeji B."/>
            <person name="Kraul M."/>
            <person name="Shetty J."/>
            <person name="Malek J.A."/>
            <person name="Van Aken S.E."/>
            <person name="Riedmuller S."/>
            <person name="Tettelin H."/>
            <person name="Gill S.R."/>
            <person name="White O."/>
            <person name="Salzberg S.L."/>
            <person name="Hoover D.L."/>
            <person name="Lindler L.E."/>
            <person name="Halling S.M."/>
            <person name="Boyle S.M."/>
            <person name="Fraser C.M."/>
        </authorList>
    </citation>
    <scope>NUCLEOTIDE SEQUENCE [LARGE SCALE GENOMIC DNA]</scope>
    <source>
        <strain>1330</strain>
    </source>
</reference>
<reference key="2">
    <citation type="journal article" date="2011" name="J. Bacteriol.">
        <title>Revised genome sequence of Brucella suis 1330.</title>
        <authorList>
            <person name="Tae H."/>
            <person name="Shallom S."/>
            <person name="Settlage R."/>
            <person name="Preston D."/>
            <person name="Adams L.G."/>
            <person name="Garner H.R."/>
        </authorList>
    </citation>
    <scope>NUCLEOTIDE SEQUENCE [LARGE SCALE GENOMIC DNA]</scope>
    <source>
        <strain>1330</strain>
    </source>
</reference>
<comment type="function">
    <text evidence="1">Required for maturation of 30S ribosomal subunits.</text>
</comment>
<comment type="subcellular location">
    <subcellularLocation>
        <location evidence="1">Cytoplasm</location>
    </subcellularLocation>
</comment>
<comment type="similarity">
    <text evidence="1">Belongs to the RimP family.</text>
</comment>
<feature type="chain" id="PRO_0000181855" description="Ribosome maturation factor RimP">
    <location>
        <begin position="1"/>
        <end position="219"/>
    </location>
</feature>
<feature type="region of interest" description="Disordered" evidence="2">
    <location>
        <begin position="195"/>
        <end position="219"/>
    </location>
</feature>
<protein>
    <recommendedName>
        <fullName evidence="1">Ribosome maturation factor RimP</fullName>
    </recommendedName>
</protein>
<organism>
    <name type="scientific">Brucella suis biovar 1 (strain 1330)</name>
    <dbReference type="NCBI Taxonomy" id="204722"/>
    <lineage>
        <taxon>Bacteria</taxon>
        <taxon>Pseudomonadati</taxon>
        <taxon>Pseudomonadota</taxon>
        <taxon>Alphaproteobacteria</taxon>
        <taxon>Hyphomicrobiales</taxon>
        <taxon>Brucellaceae</taxon>
        <taxon>Brucella/Ochrobactrum group</taxon>
        <taxon>Brucella</taxon>
    </lineage>
</organism>
<accession>P67213</accession>
<accession>G0K9I8</accession>
<accession>Q8FXT5</accession>
<accession>Q8YEB0</accession>
<gene>
    <name evidence="1" type="primary">rimP</name>
    <name type="ordered locus">BR2162</name>
    <name type="ordered locus">BS1330_I2156</name>
</gene>
<dbReference type="EMBL" id="AE014291">
    <property type="protein sequence ID" value="AAN31052.1"/>
    <property type="molecule type" value="Genomic_DNA"/>
</dbReference>
<dbReference type="EMBL" id="CP002997">
    <property type="protein sequence ID" value="AEM19469.1"/>
    <property type="molecule type" value="Genomic_DNA"/>
</dbReference>
<dbReference type="RefSeq" id="WP_002965224.1">
    <property type="nucleotide sequence ID" value="NZ_KN046804.1"/>
</dbReference>
<dbReference type="SMR" id="P67213"/>
<dbReference type="GeneID" id="97534585"/>
<dbReference type="KEGG" id="bms:BR2162"/>
<dbReference type="KEGG" id="bsi:BS1330_I2156"/>
<dbReference type="PATRIC" id="fig|204722.21.peg.650"/>
<dbReference type="HOGENOM" id="CLU_070525_0_1_5"/>
<dbReference type="PhylomeDB" id="P67213"/>
<dbReference type="Proteomes" id="UP000007104">
    <property type="component" value="Chromosome I"/>
</dbReference>
<dbReference type="GO" id="GO:0005829">
    <property type="term" value="C:cytosol"/>
    <property type="evidence" value="ECO:0007669"/>
    <property type="project" value="TreeGrafter"/>
</dbReference>
<dbReference type="GO" id="GO:0000028">
    <property type="term" value="P:ribosomal small subunit assembly"/>
    <property type="evidence" value="ECO:0007669"/>
    <property type="project" value="TreeGrafter"/>
</dbReference>
<dbReference type="GO" id="GO:0006412">
    <property type="term" value="P:translation"/>
    <property type="evidence" value="ECO:0007669"/>
    <property type="project" value="TreeGrafter"/>
</dbReference>
<dbReference type="CDD" id="cd01734">
    <property type="entry name" value="YlxS_C"/>
    <property type="match status" value="1"/>
</dbReference>
<dbReference type="Gene3D" id="3.30.300.70">
    <property type="entry name" value="RimP-like superfamily, N-terminal"/>
    <property type="match status" value="1"/>
</dbReference>
<dbReference type="HAMAP" id="MF_01077">
    <property type="entry name" value="RimP"/>
    <property type="match status" value="1"/>
</dbReference>
<dbReference type="InterPro" id="IPR003728">
    <property type="entry name" value="Ribosome_maturation_RimP"/>
</dbReference>
<dbReference type="InterPro" id="IPR028998">
    <property type="entry name" value="RimP_C"/>
</dbReference>
<dbReference type="InterPro" id="IPR036847">
    <property type="entry name" value="RimP_C_sf"/>
</dbReference>
<dbReference type="InterPro" id="IPR028989">
    <property type="entry name" value="RimP_N"/>
</dbReference>
<dbReference type="InterPro" id="IPR035956">
    <property type="entry name" value="RimP_N_sf"/>
</dbReference>
<dbReference type="NCBIfam" id="NF000932">
    <property type="entry name" value="PRK00092.2-5"/>
    <property type="match status" value="1"/>
</dbReference>
<dbReference type="PANTHER" id="PTHR33867">
    <property type="entry name" value="RIBOSOME MATURATION FACTOR RIMP"/>
    <property type="match status" value="1"/>
</dbReference>
<dbReference type="PANTHER" id="PTHR33867:SF1">
    <property type="entry name" value="RIBOSOME MATURATION FACTOR RIMP"/>
    <property type="match status" value="1"/>
</dbReference>
<dbReference type="Pfam" id="PF17384">
    <property type="entry name" value="DUF150_C"/>
    <property type="match status" value="1"/>
</dbReference>
<dbReference type="Pfam" id="PF02576">
    <property type="entry name" value="RimP_N"/>
    <property type="match status" value="1"/>
</dbReference>
<dbReference type="SUPFAM" id="SSF74942">
    <property type="entry name" value="YhbC-like, C-terminal domain"/>
    <property type="match status" value="1"/>
</dbReference>
<dbReference type="SUPFAM" id="SSF75420">
    <property type="entry name" value="YhbC-like, N-terminal domain"/>
    <property type="match status" value="1"/>
</dbReference>
<keyword id="KW-0963">Cytoplasm</keyword>
<keyword id="KW-0690">Ribosome biogenesis</keyword>
<proteinExistence type="inferred from homology"/>
<evidence type="ECO:0000255" key="1">
    <source>
        <dbReference type="HAMAP-Rule" id="MF_01077"/>
    </source>
</evidence>
<evidence type="ECO:0000256" key="2">
    <source>
        <dbReference type="SAM" id="MobiDB-lite"/>
    </source>
</evidence>
<name>RIMP_BRUSU</name>